<proteinExistence type="inferred from homology"/>
<feature type="chain" id="PRO_0000438557" description="Cytochrome P450 monooxygenase ccsD">
    <location>
        <begin position="1"/>
        <end position="494"/>
    </location>
</feature>
<feature type="transmembrane region" description="Helical" evidence="2">
    <location>
        <begin position="5"/>
        <end position="25"/>
    </location>
</feature>
<feature type="binding site" description="axial binding residue" evidence="1">
    <location>
        <position position="438"/>
    </location>
    <ligand>
        <name>heme</name>
        <dbReference type="ChEBI" id="CHEBI:30413"/>
    </ligand>
    <ligandPart>
        <name>Fe</name>
        <dbReference type="ChEBI" id="CHEBI:18248"/>
    </ligandPart>
</feature>
<feature type="glycosylation site" description="N-linked (GlcNAc...) asparagine" evidence="3">
    <location>
        <position position="445"/>
    </location>
</feature>
<feature type="glycosylation site" description="N-linked (GlcNAc...) asparagine" evidence="3">
    <location>
        <position position="477"/>
    </location>
</feature>
<keyword id="KW-0325">Glycoprotein</keyword>
<keyword id="KW-0408">Iron</keyword>
<keyword id="KW-0472">Membrane</keyword>
<keyword id="KW-0479">Metal-binding</keyword>
<keyword id="KW-0503">Monooxygenase</keyword>
<keyword id="KW-0560">Oxidoreductase</keyword>
<keyword id="KW-1185">Reference proteome</keyword>
<keyword id="KW-0812">Transmembrane</keyword>
<keyword id="KW-1133">Transmembrane helix</keyword>
<evidence type="ECO:0000250" key="1">
    <source>
        <dbReference type="UniProtKB" id="P04798"/>
    </source>
</evidence>
<evidence type="ECO:0000255" key="2"/>
<evidence type="ECO:0000255" key="3">
    <source>
        <dbReference type="PROSITE-ProRule" id="PRU00498"/>
    </source>
</evidence>
<evidence type="ECO:0000269" key="4">
    <source>
    </source>
</evidence>
<evidence type="ECO:0000269" key="5">
    <source>
    </source>
</evidence>
<evidence type="ECO:0000269" key="6">
    <source>
    </source>
</evidence>
<evidence type="ECO:0000303" key="7">
    <source>
    </source>
</evidence>
<evidence type="ECO:0000305" key="8"/>
<evidence type="ECO:0000305" key="9">
    <source>
    </source>
</evidence>
<name>CCSD_ASPCL</name>
<sequence>MVNEISPRTLVLLAVTCSLLVLYFSTRERQPVMPRELPVVKAKSYHFEDIIVEGRKKYPDRPYLAVNNRHSFVVYPPSCFDEIKRLPEHSASAKDFFHTMNAGDWTYVGHETTPLLKTIIADLTRVIPARVNKRQQDTRMAFESIVGYAPEWKEIGLLMTTFEIVAKINACAFVGRELGTNNKWVKAVMQSPLVIHVAVLIMNACPALLRPLLAPLAFLPTKMNQWDMRRLLTPMLQEDMAIFKETKDRSELLRPKQNGKIPLTAMLLSRYKQGEATIRQLIVDYILISFDSTPSTASALYHVICELAAHPEAADVLRQELDEVMVDGKLPQTHLQELKRMDSFLRESFRLHPVSLFSLQRVLAKPVKLSVGPTIPAGAIIAVDAAAINRSPSLWKDPDEFDMNRFHDLRQVPGNENKFHLLNTGSDSPGWGDGTQACPGRFFANSTLKIAFAYILQNYDVKRKEGSSPPKMTPLANGTWAPDDKAAALFKSRN</sequence>
<comment type="function">
    <text evidence="4 5 6">Cytochrome P450 monooxygenase; part of the gene cluster that mediates the biosynthesis of a family of the mycotoxins cytochalasins E and K (PubMed:21983160). The hybrid PKS-NRPS synthetase ccsA and the enoyl reductase ccsC are responsible for fusion of phenylalanine with an octaketide backbone and subsequent release of the stable tetramic acid precursor (PubMed:21983160, PubMed:27551732). The polyketide synthase module (PKS) of the PKS-NRPS ccsA is responsible for the synthesis of the octaketide backbone (PubMed:21983160). The downstream nonribosomal peptide synthetase (NRPS) amidates the carboxyl end of the octaketide with a phenylalanine (PubMed:21983160). A reductase-like domain (R) at the C-terminus catalyzes the reductive release of the polyketide-amino acid intermediate (PubMed:21983160). Because ccsA lacks a designated enoylreductase (ER) domain, the required activity is provided the enoyl reductase ccsC (PubMed:21983160, PubMed:27551732). Upon formation of the 11-membered carbocycle-fused perhydroisoindolone intermediate, a number of oxidative steps are required to afford the final cytochalasin E and K, including two hydroxylations at C17 and C18, one alcohol oxidation at C17, one epoxidation at C6 and C7 and two Baeyer-Villiger oxidations (PubMed:21983160). The oxidative modification at C17, C18 and the C6-C7 epoxidation are likely to be catalyzed by the two cytochrome P450 oxygenases ccsD and ccsG (PubMed:21983160). CcsD may be responsible for the epoxidation of the C6-C7 double bond (PubMed:21983160). CcsG may be responsible for the successive oxidative modifications at C17 and C18 (PubMed:21983160). The double Baeyer-Villiger oxidations of ketocytochalasin to precytochalasin and cytochalasin Z(16) are among the final steps leading to cytochalasin E and K and are catalyzed by ccsB (PubMed:21983160, PubMed:24838010). The first oxygen insertion step follows that of the classic BVMO mechanism, generating the ester precytochalasin (PubMed:24838010). Release of precytochalasin into an aqueous environment can generate the shunt product iso-precytochalasin through spontaneous isomerization (PubMed:24838010). Alternatively, precytochalasin can undergo further oxidation by ccsB to yield the in-line carbonate-containing cytochalasin Z(16) (PubMed:24838010). Cytochalasin Z(16) is a precursor to cytochalasin E and cytochalasin K, whereas iso-precytochalasin is a precursor to cytochalasin Z(17) and rosellichalasin (PubMed:21983160, PubMed:24838010). The hydrolyase ccsE may catalyze hydrolysis of epoxide bond in cytochalasin E to afford cytochalasin K (PubMed:21983160). The function of ccsF has not been assigned but it may play a role in post-PKS-NRPS biosynthetic step, resistance or transport of cytochalasins and related PKS-NRPS products (PubMed:21983160).</text>
</comment>
<comment type="cofactor">
    <cofactor evidence="1">
        <name>heme</name>
        <dbReference type="ChEBI" id="CHEBI:30413"/>
    </cofactor>
</comment>
<comment type="pathway">
    <text evidence="9">Mycotoxin biosynthesis.</text>
</comment>
<comment type="subcellular location">
    <subcellularLocation>
        <location evidence="2">Membrane</location>
        <topology evidence="2">Single-pass membrane protein</topology>
    </subcellularLocation>
</comment>
<comment type="similarity">
    <text evidence="8">Belongs to the cytochrome P450 family.</text>
</comment>
<dbReference type="EC" id="1.-.-.-" evidence="9"/>
<dbReference type="EMBL" id="DS027057">
    <property type="protein sequence ID" value="EAW09118.1"/>
    <property type="molecule type" value="Genomic_DNA"/>
</dbReference>
<dbReference type="RefSeq" id="XP_001270544.1">
    <property type="nucleotide sequence ID" value="XM_001270543.1"/>
</dbReference>
<dbReference type="SMR" id="A1CLY9"/>
<dbReference type="STRING" id="344612.A1CLY9"/>
<dbReference type="GlyCosmos" id="A1CLY9">
    <property type="glycosylation" value="2 sites, No reported glycans"/>
</dbReference>
<dbReference type="EnsemblFungi" id="EAW09118">
    <property type="protein sequence ID" value="EAW09118"/>
    <property type="gene ID" value="ACLA_078670"/>
</dbReference>
<dbReference type="GeneID" id="4702684"/>
<dbReference type="KEGG" id="act:ACLA_078670"/>
<dbReference type="VEuPathDB" id="FungiDB:ACLA_078670"/>
<dbReference type="eggNOG" id="KOG0157">
    <property type="taxonomic scope" value="Eukaryota"/>
</dbReference>
<dbReference type="HOGENOM" id="CLU_022195_0_2_1"/>
<dbReference type="OMA" id="KMTPLAN"/>
<dbReference type="OrthoDB" id="1844152at2759"/>
<dbReference type="Proteomes" id="UP000006701">
    <property type="component" value="Unassembled WGS sequence"/>
</dbReference>
<dbReference type="GO" id="GO:0016020">
    <property type="term" value="C:membrane"/>
    <property type="evidence" value="ECO:0007669"/>
    <property type="project" value="UniProtKB-SubCell"/>
</dbReference>
<dbReference type="GO" id="GO:0020037">
    <property type="term" value="F:heme binding"/>
    <property type="evidence" value="ECO:0007669"/>
    <property type="project" value="InterPro"/>
</dbReference>
<dbReference type="GO" id="GO:0005506">
    <property type="term" value="F:iron ion binding"/>
    <property type="evidence" value="ECO:0007669"/>
    <property type="project" value="InterPro"/>
</dbReference>
<dbReference type="GO" id="GO:0004497">
    <property type="term" value="F:monooxygenase activity"/>
    <property type="evidence" value="ECO:0007669"/>
    <property type="project" value="UniProtKB-KW"/>
</dbReference>
<dbReference type="GO" id="GO:0016705">
    <property type="term" value="F:oxidoreductase activity, acting on paired donors, with incorporation or reduction of molecular oxygen"/>
    <property type="evidence" value="ECO:0007669"/>
    <property type="project" value="InterPro"/>
</dbReference>
<dbReference type="GO" id="GO:0019748">
    <property type="term" value="P:secondary metabolic process"/>
    <property type="evidence" value="ECO:0007669"/>
    <property type="project" value="UniProtKB-ARBA"/>
</dbReference>
<dbReference type="GO" id="GO:0044283">
    <property type="term" value="P:small molecule biosynthetic process"/>
    <property type="evidence" value="ECO:0007669"/>
    <property type="project" value="UniProtKB-ARBA"/>
</dbReference>
<dbReference type="CDD" id="cd11041">
    <property type="entry name" value="CYP503A1-like"/>
    <property type="match status" value="1"/>
</dbReference>
<dbReference type="Gene3D" id="1.10.630.10">
    <property type="entry name" value="Cytochrome P450"/>
    <property type="match status" value="1"/>
</dbReference>
<dbReference type="InterPro" id="IPR001128">
    <property type="entry name" value="Cyt_P450"/>
</dbReference>
<dbReference type="InterPro" id="IPR002401">
    <property type="entry name" value="Cyt_P450_E_grp-I"/>
</dbReference>
<dbReference type="InterPro" id="IPR036396">
    <property type="entry name" value="Cyt_P450_sf"/>
</dbReference>
<dbReference type="PANTHER" id="PTHR46206">
    <property type="entry name" value="CYTOCHROME P450"/>
    <property type="match status" value="1"/>
</dbReference>
<dbReference type="PANTHER" id="PTHR46206:SF6">
    <property type="entry name" value="CYTOCHROME P450 MONOOXYGENASE AN1598-RELATED"/>
    <property type="match status" value="1"/>
</dbReference>
<dbReference type="Pfam" id="PF00067">
    <property type="entry name" value="p450"/>
    <property type="match status" value="1"/>
</dbReference>
<dbReference type="PRINTS" id="PR00463">
    <property type="entry name" value="EP450I"/>
</dbReference>
<dbReference type="SUPFAM" id="SSF48264">
    <property type="entry name" value="Cytochrome P450"/>
    <property type="match status" value="1"/>
</dbReference>
<protein>
    <recommendedName>
        <fullName evidence="7">Cytochrome P450 monooxygenase ccsD</fullName>
        <ecNumber evidence="9">1.-.-.-</ecNumber>
    </recommendedName>
    <alternativeName>
        <fullName evidence="7">Cytochalasin biosynthesis protein D</fullName>
    </alternativeName>
</protein>
<reference key="1">
    <citation type="journal article" date="2008" name="PLoS Genet.">
        <title>Genomic islands in the pathogenic filamentous fungus Aspergillus fumigatus.</title>
        <authorList>
            <person name="Fedorova N.D."/>
            <person name="Khaldi N."/>
            <person name="Joardar V.S."/>
            <person name="Maiti R."/>
            <person name="Amedeo P."/>
            <person name="Anderson M.J."/>
            <person name="Crabtree J."/>
            <person name="Silva J.C."/>
            <person name="Badger J.H."/>
            <person name="Albarraq A."/>
            <person name="Angiuoli S."/>
            <person name="Bussey H."/>
            <person name="Bowyer P."/>
            <person name="Cotty P.J."/>
            <person name="Dyer P.S."/>
            <person name="Egan A."/>
            <person name="Galens K."/>
            <person name="Fraser-Liggett C.M."/>
            <person name="Haas B.J."/>
            <person name="Inman J.M."/>
            <person name="Kent R."/>
            <person name="Lemieux S."/>
            <person name="Malavazi I."/>
            <person name="Orvis J."/>
            <person name="Roemer T."/>
            <person name="Ronning C.M."/>
            <person name="Sundaram J.P."/>
            <person name="Sutton G."/>
            <person name="Turner G."/>
            <person name="Venter J.C."/>
            <person name="White O.R."/>
            <person name="Whitty B.R."/>
            <person name="Youngman P."/>
            <person name="Wolfe K.H."/>
            <person name="Goldman G.H."/>
            <person name="Wortman J.R."/>
            <person name="Jiang B."/>
            <person name="Denning D.W."/>
            <person name="Nierman W.C."/>
        </authorList>
    </citation>
    <scope>NUCLEOTIDE SEQUENCE [LARGE SCALE GENOMIC DNA]</scope>
    <source>
        <strain>ATCC 1007 / CBS 513.65 / DSM 816 / NCTC 3887 / NRRL 1 / QM 1276 / 107</strain>
    </source>
</reference>
<reference key="2">
    <citation type="journal article" date="2011" name="Metab. Eng.">
        <title>Identification and engineering of the cytochalasin gene cluster from Aspergillus clavatus NRRL 1.</title>
        <authorList>
            <person name="Qiao K."/>
            <person name="Chooi Y.H."/>
            <person name="Tang Y."/>
        </authorList>
    </citation>
    <scope>FUNCTION</scope>
    <scope>PATHWAY</scope>
    <source>
        <strain>ATCC 1007 / CBS 513.65 / DSM 816 / NCTC 3887 / NRRL 1</strain>
    </source>
</reference>
<reference key="3">
    <citation type="journal article" date="2014" name="Nat. Chem. Biol.">
        <title>A carbonate-forming Baeyer-Villiger monooxygenase.</title>
        <authorList>
            <person name="Hu Y."/>
            <person name="Dietrich D."/>
            <person name="Xu W."/>
            <person name="Patel A."/>
            <person name="Thuss J.A."/>
            <person name="Wang J."/>
            <person name="Yin W.B."/>
            <person name="Qiao K."/>
            <person name="Houk K.N."/>
            <person name="Vederas J.C."/>
            <person name="Tang Y."/>
        </authorList>
    </citation>
    <scope>FUNCTION</scope>
    <source>
        <strain>ATCC 1007 / CBS 513.65 / DSM 816 / NCTC 3887 / NRRL 1</strain>
    </source>
</reference>
<reference key="4">
    <citation type="journal article" date="2016" name="PLoS ONE">
        <title>Linker flexibility facilitates module exchange in fungal hybrid PKS-NRPS engineering.</title>
        <authorList>
            <person name="Nielsen M.L."/>
            <person name="Isbrandt T."/>
            <person name="Petersen L.M."/>
            <person name="Mortensen U.H."/>
            <person name="Andersen M.R."/>
            <person name="Hoof J.B."/>
            <person name="Larsen T.O."/>
        </authorList>
    </citation>
    <scope>FUNCTION</scope>
</reference>
<accession>A1CLY9</accession>
<gene>
    <name evidence="7" type="primary">ccsD</name>
    <name type="ORF">ACLA_078670</name>
</gene>
<organism>
    <name type="scientific">Aspergillus clavatus (strain ATCC 1007 / CBS 513.65 / DSM 816 / NCTC 3887 / NRRL 1 / QM 1276 / 107)</name>
    <dbReference type="NCBI Taxonomy" id="344612"/>
    <lineage>
        <taxon>Eukaryota</taxon>
        <taxon>Fungi</taxon>
        <taxon>Dikarya</taxon>
        <taxon>Ascomycota</taxon>
        <taxon>Pezizomycotina</taxon>
        <taxon>Eurotiomycetes</taxon>
        <taxon>Eurotiomycetidae</taxon>
        <taxon>Eurotiales</taxon>
        <taxon>Aspergillaceae</taxon>
        <taxon>Aspergillus</taxon>
        <taxon>Aspergillus subgen. Fumigati</taxon>
    </lineage>
</organism>